<dbReference type="EMBL" id="AE016877">
    <property type="protein sequence ID" value="AAP08287.1"/>
    <property type="molecule type" value="Genomic_DNA"/>
</dbReference>
<dbReference type="RefSeq" id="NP_831086.1">
    <property type="nucleotide sequence ID" value="NC_004722.1"/>
</dbReference>
<dbReference type="RefSeq" id="WP_000061930.1">
    <property type="nucleotide sequence ID" value="NZ_CP138336.1"/>
</dbReference>
<dbReference type="STRING" id="226900.BC_1304"/>
<dbReference type="KEGG" id="bce:BC1304"/>
<dbReference type="PATRIC" id="fig|226900.8.peg.1277"/>
<dbReference type="HOGENOM" id="CLU_027059_2_0_9"/>
<dbReference type="OrthoDB" id="9782337at2"/>
<dbReference type="Proteomes" id="UP000001417">
    <property type="component" value="Chromosome"/>
</dbReference>
<dbReference type="GO" id="GO:0051539">
    <property type="term" value="F:4 iron, 4 sulfur cluster binding"/>
    <property type="evidence" value="ECO:0007669"/>
    <property type="project" value="UniProtKB-KW"/>
</dbReference>
<dbReference type="GO" id="GO:0004459">
    <property type="term" value="F:L-lactate dehydrogenase activity"/>
    <property type="evidence" value="ECO:0000318"/>
    <property type="project" value="GO_Central"/>
</dbReference>
<dbReference type="GO" id="GO:0046872">
    <property type="term" value="F:metal ion binding"/>
    <property type="evidence" value="ECO:0007669"/>
    <property type="project" value="UniProtKB-KW"/>
</dbReference>
<dbReference type="GO" id="GO:1903457">
    <property type="term" value="P:lactate catabolic process"/>
    <property type="evidence" value="ECO:0000318"/>
    <property type="project" value="GO_Central"/>
</dbReference>
<dbReference type="Gene3D" id="1.10.1060.10">
    <property type="entry name" value="Alpha-helical ferredoxin"/>
    <property type="match status" value="1"/>
</dbReference>
<dbReference type="Gene3D" id="3.40.50.10420">
    <property type="entry name" value="NagB/RpiA/CoA transferase-like"/>
    <property type="match status" value="1"/>
</dbReference>
<dbReference type="HAMAP" id="MF_02103">
    <property type="entry name" value="LutB"/>
    <property type="match status" value="1"/>
</dbReference>
<dbReference type="InterPro" id="IPR017896">
    <property type="entry name" value="4Fe4S_Fe-S-bd"/>
</dbReference>
<dbReference type="InterPro" id="IPR017900">
    <property type="entry name" value="4Fe4S_Fe_S_CS"/>
</dbReference>
<dbReference type="InterPro" id="IPR024185">
    <property type="entry name" value="FTHF_cligase-like_sf"/>
</dbReference>
<dbReference type="InterPro" id="IPR009051">
    <property type="entry name" value="Helical_ferredxn"/>
</dbReference>
<dbReference type="InterPro" id="IPR003741">
    <property type="entry name" value="LUD_dom"/>
</dbReference>
<dbReference type="InterPro" id="IPR022825">
    <property type="entry name" value="LutB"/>
</dbReference>
<dbReference type="InterPro" id="IPR004452">
    <property type="entry name" value="LutB/LldF"/>
</dbReference>
<dbReference type="InterPro" id="IPR024569">
    <property type="entry name" value="LutB_C"/>
</dbReference>
<dbReference type="InterPro" id="IPR037171">
    <property type="entry name" value="NagB/RpiA_transferase-like"/>
</dbReference>
<dbReference type="NCBIfam" id="TIGR00273">
    <property type="entry name" value="LutB/LldF family L-lactate oxidation iron-sulfur protein"/>
    <property type="match status" value="1"/>
</dbReference>
<dbReference type="PANTHER" id="PTHR47153">
    <property type="entry name" value="LACTATE UTILIZATION PROTEIN B"/>
    <property type="match status" value="1"/>
</dbReference>
<dbReference type="PANTHER" id="PTHR47153:SF2">
    <property type="entry name" value="LACTATE UTILIZATION PROTEIN B"/>
    <property type="match status" value="1"/>
</dbReference>
<dbReference type="Pfam" id="PF13183">
    <property type="entry name" value="Fer4_8"/>
    <property type="match status" value="1"/>
</dbReference>
<dbReference type="Pfam" id="PF02589">
    <property type="entry name" value="LUD_dom"/>
    <property type="match status" value="1"/>
</dbReference>
<dbReference type="Pfam" id="PF11870">
    <property type="entry name" value="LutB_C"/>
    <property type="match status" value="1"/>
</dbReference>
<dbReference type="SUPFAM" id="SSF46548">
    <property type="entry name" value="alpha-helical ferredoxin"/>
    <property type="match status" value="1"/>
</dbReference>
<dbReference type="SUPFAM" id="SSF100950">
    <property type="entry name" value="NagB/RpiA/CoA transferase-like"/>
    <property type="match status" value="1"/>
</dbReference>
<dbReference type="PROSITE" id="PS00198">
    <property type="entry name" value="4FE4S_FER_1"/>
    <property type="match status" value="1"/>
</dbReference>
<evidence type="ECO:0000255" key="1">
    <source>
        <dbReference type="HAMAP-Rule" id="MF_02103"/>
    </source>
</evidence>
<evidence type="ECO:0000269" key="2">
    <source>
    </source>
</evidence>
<name>LUTB_BACCR</name>
<comment type="function">
    <text evidence="1 2">Is involved in L-lactate degradation and allows cells to grow with lactate as the sole carbon source. Has probably a role as an electron transporter during oxidation of L-lactate.</text>
</comment>
<comment type="similarity">
    <text evidence="1">Belongs to the LutB/YkgF family.</text>
</comment>
<proteinExistence type="inferred from homology"/>
<feature type="chain" id="PRO_0000383971" description="Lactate utilization protein B">
    <location>
        <begin position="1"/>
        <end position="473"/>
    </location>
</feature>
<feature type="domain" description="4Fe-4S ferredoxin-type 1" evidence="1">
    <location>
        <begin position="302"/>
        <end position="332"/>
    </location>
</feature>
<feature type="domain" description="4Fe-4S ferredoxin-type 2" evidence="1">
    <location>
        <begin position="351"/>
        <end position="380"/>
    </location>
</feature>
<feature type="binding site" evidence="1">
    <location>
        <position position="311"/>
    </location>
    <ligand>
        <name>[4Fe-4S] cluster</name>
        <dbReference type="ChEBI" id="CHEBI:49883"/>
        <label>1</label>
    </ligand>
</feature>
<feature type="binding site" evidence="1">
    <location>
        <position position="314"/>
    </location>
    <ligand>
        <name>[4Fe-4S] cluster</name>
        <dbReference type="ChEBI" id="CHEBI:49883"/>
        <label>1</label>
    </ligand>
</feature>
<feature type="binding site" evidence="1">
    <location>
        <position position="317"/>
    </location>
    <ligand>
        <name>[4Fe-4S] cluster</name>
        <dbReference type="ChEBI" id="CHEBI:49883"/>
        <label>1</label>
    </ligand>
</feature>
<feature type="binding site" evidence="1">
    <location>
        <position position="321"/>
    </location>
    <ligand>
        <name>[4Fe-4S] cluster</name>
        <dbReference type="ChEBI" id="CHEBI:49883"/>
        <label>2</label>
    </ligand>
</feature>
<feature type="binding site" evidence="1">
    <location>
        <position position="364"/>
    </location>
    <ligand>
        <name>[4Fe-4S] cluster</name>
        <dbReference type="ChEBI" id="CHEBI:49883"/>
        <label>2</label>
    </ligand>
</feature>
<feature type="binding site" evidence="1">
    <location>
        <position position="367"/>
    </location>
    <ligand>
        <name>[4Fe-4S] cluster</name>
        <dbReference type="ChEBI" id="CHEBI:49883"/>
        <label>2</label>
    </ligand>
</feature>
<feature type="binding site" evidence="1">
    <location>
        <position position="371"/>
    </location>
    <ligand>
        <name>[4Fe-4S] cluster</name>
        <dbReference type="ChEBI" id="CHEBI:49883"/>
        <label>1</label>
    </ligand>
</feature>
<keyword id="KW-0004">4Fe-4S</keyword>
<keyword id="KW-0249">Electron transport</keyword>
<keyword id="KW-0408">Iron</keyword>
<keyword id="KW-0411">Iron-sulfur</keyword>
<keyword id="KW-0479">Metal-binding</keyword>
<keyword id="KW-1185">Reference proteome</keyword>
<keyword id="KW-0677">Repeat</keyword>
<keyword id="KW-0813">Transport</keyword>
<accession>Q81GA4</accession>
<organism>
    <name type="scientific">Bacillus cereus (strain ATCC 14579 / DSM 31 / CCUG 7414 / JCM 2152 / NBRC 15305 / NCIMB 9373 / NCTC 2599 / NRRL B-3711)</name>
    <dbReference type="NCBI Taxonomy" id="226900"/>
    <lineage>
        <taxon>Bacteria</taxon>
        <taxon>Bacillati</taxon>
        <taxon>Bacillota</taxon>
        <taxon>Bacilli</taxon>
        <taxon>Bacillales</taxon>
        <taxon>Bacillaceae</taxon>
        <taxon>Bacillus</taxon>
        <taxon>Bacillus cereus group</taxon>
    </lineage>
</organism>
<reference key="1">
    <citation type="journal article" date="2003" name="Nature">
        <title>Genome sequence of Bacillus cereus and comparative analysis with Bacillus anthracis.</title>
        <authorList>
            <person name="Ivanova N."/>
            <person name="Sorokin A."/>
            <person name="Anderson I."/>
            <person name="Galleron N."/>
            <person name="Candelon B."/>
            <person name="Kapatral V."/>
            <person name="Bhattacharyya A."/>
            <person name="Reznik G."/>
            <person name="Mikhailova N."/>
            <person name="Lapidus A."/>
            <person name="Chu L."/>
            <person name="Mazur M."/>
            <person name="Goltsman E."/>
            <person name="Larsen N."/>
            <person name="D'Souza M."/>
            <person name="Walunas T."/>
            <person name="Grechkin Y."/>
            <person name="Pusch G."/>
            <person name="Haselkorn R."/>
            <person name="Fonstein M."/>
            <person name="Ehrlich S.D."/>
            <person name="Overbeek R."/>
            <person name="Kyrpides N.C."/>
        </authorList>
    </citation>
    <scope>NUCLEOTIDE SEQUENCE [LARGE SCALE GENOMIC DNA]</scope>
    <source>
        <strain>ATCC 14579 / DSM 31 / CCUG 7414 / JCM 2152 / NBRC 15305 / NCIMB 9373 / NCTC 2599 / NRRL B-3711</strain>
    </source>
</reference>
<reference key="2">
    <citation type="journal article" date="2009" name="J. Bacteriol.">
        <title>A widely conserved gene cluster required for lactate utilization in Bacillus subtilis and its involvement in biofilm formation.</title>
        <authorList>
            <person name="Chai Y."/>
            <person name="Kolter R."/>
            <person name="Losick R."/>
        </authorList>
    </citation>
    <scope>FUNCTION BY COMPLEMENTATION OF B.SUBTILIS LUTABC OPERON</scope>
</reference>
<protein>
    <recommendedName>
        <fullName evidence="1">Lactate utilization protein B</fullName>
    </recommendedName>
</protein>
<sequence length="473" mass="52627">MSMKISEKKFNDRVGDGIQDSFMRGAVSSAQTRLYTNRLKAADELGNWEEWRELGEQIRQHTLENLDYYLMQLSENVSKRGGHVYFAKTKEEAAKYIQDVAKKKQAKKVVKSKSMVTEEISMNHALEEIGCEVLESDLGEYILQVDNDPPSHIIAPALHKNRTQIRDVFKEKLGYENSDDPYEMTKFVRKQLREKFMDAEIGVTGCNFAVANTGSLCLVTNEGNADLVMSIPKTQIAVMGMERMVPTMEELDVLVGLLCRSAVGQKLTSYVTVAGPIQEEEVDGPEEFHLVVVDNGRSQILGSEFRSVLQCIRCAACVNVCPVYRHVGGHSYGSIYSGPIGAVLTPLLGGYDDYKELPYASSLCGACTEACPVKIPLHDLLLKHRQVIVEQEGRAPLAEKLAMKMFSMGASSAALYKMGSKMAPAAMSPFTSGNRVSKGVGPLKNWTDIREFPAPSKERFRDWYKDHKKGGDK</sequence>
<gene>
    <name evidence="1" type="primary">lutB</name>
    <name type="ordered locus">BC_1304</name>
</gene>